<comment type="function">
    <text evidence="1">ATPase subunit of a proteasome-like degradation complex; this subunit has chaperone activity. The binding of ATP and its subsequent hydrolysis by HslU are essential for unfolding of protein substrates subsequently hydrolyzed by HslV. HslU recognizes the N-terminal part of its protein substrates and unfolds these before they are guided to HslV for hydrolysis.</text>
</comment>
<comment type="subunit">
    <text evidence="1">A double ring-shaped homohexamer of HslV is capped on each side by a ring-shaped HslU homohexamer. The assembly of the HslU/HslV complex is dependent on binding of ATP.</text>
</comment>
<comment type="subcellular location">
    <subcellularLocation>
        <location evidence="1">Cytoplasm</location>
    </subcellularLocation>
</comment>
<comment type="similarity">
    <text evidence="1">Belongs to the ClpX chaperone family. HslU subfamily.</text>
</comment>
<keyword id="KW-0067">ATP-binding</keyword>
<keyword id="KW-0143">Chaperone</keyword>
<keyword id="KW-0963">Cytoplasm</keyword>
<keyword id="KW-0547">Nucleotide-binding</keyword>
<keyword id="KW-1185">Reference proteome</keyword>
<keyword id="KW-0346">Stress response</keyword>
<feature type="chain" id="PRO_1000100935" description="ATP-dependent protease ATPase subunit HslU">
    <location>
        <begin position="1"/>
        <end position="435"/>
    </location>
</feature>
<feature type="binding site" evidence="1">
    <location>
        <position position="18"/>
    </location>
    <ligand>
        <name>ATP</name>
        <dbReference type="ChEBI" id="CHEBI:30616"/>
    </ligand>
</feature>
<feature type="binding site" evidence="1">
    <location>
        <begin position="60"/>
        <end position="65"/>
    </location>
    <ligand>
        <name>ATP</name>
        <dbReference type="ChEBI" id="CHEBI:30616"/>
    </ligand>
</feature>
<feature type="binding site" evidence="1">
    <location>
        <position position="248"/>
    </location>
    <ligand>
        <name>ATP</name>
        <dbReference type="ChEBI" id="CHEBI:30616"/>
    </ligand>
</feature>
<feature type="binding site" evidence="1">
    <location>
        <position position="313"/>
    </location>
    <ligand>
        <name>ATP</name>
        <dbReference type="ChEBI" id="CHEBI:30616"/>
    </ligand>
</feature>
<feature type="binding site" evidence="1">
    <location>
        <position position="385"/>
    </location>
    <ligand>
        <name>ATP</name>
        <dbReference type="ChEBI" id="CHEBI:30616"/>
    </ligand>
</feature>
<gene>
    <name evidence="1" type="primary">hslU</name>
    <name type="ordered locus">Bind_0251</name>
</gene>
<organism>
    <name type="scientific">Beijerinckia indica subsp. indica (strain ATCC 9039 / DSM 1715 / NCIMB 8712)</name>
    <dbReference type="NCBI Taxonomy" id="395963"/>
    <lineage>
        <taxon>Bacteria</taxon>
        <taxon>Pseudomonadati</taxon>
        <taxon>Pseudomonadota</taxon>
        <taxon>Alphaproteobacteria</taxon>
        <taxon>Hyphomicrobiales</taxon>
        <taxon>Beijerinckiaceae</taxon>
        <taxon>Beijerinckia</taxon>
    </lineage>
</organism>
<sequence length="435" mass="48083">MTDFSPREIVSELDRYIVGQNDAKRAVAIALRNRWRRLKLEGAMREEVLPKNILMIGPTGCGKTEIARRLAKLANAPFLKVEATKFTEVGYVGRDVEQIIRDLVETAIVMVKAEKRKSLEAKAHQSVEERLLDALVGANAAQTTRDSFRKKLRDGDLEDKEIEIELAQATGNLPMFDLPNMPGAAVGAISIGDIFAKSLGRSTKRRRSTVKEAREPLLAEESEKLMDQEQIIAQAIHSVENNGIVFLDEIDKICAREGRGGADVSREGVQRDLLPLIEGTSVATKHGTIKTDHILFIASGAFHVAKPSDLLPELQGRLPIRVELLPLNEEDFRRILTETEVSLIKQYEALLATEGVNLVFTPEAVSSLAKVAVQVNSSVENIGARRLQTVMERVLDEVSYTAPDRSGQTITIDAAYVEKNIGDLAKNTDLSRFIL</sequence>
<dbReference type="EMBL" id="CP001016">
    <property type="protein sequence ID" value="ACB93907.1"/>
    <property type="molecule type" value="Genomic_DNA"/>
</dbReference>
<dbReference type="RefSeq" id="WP_012383265.1">
    <property type="nucleotide sequence ID" value="NC_010581.1"/>
</dbReference>
<dbReference type="SMR" id="B2ICL8"/>
<dbReference type="STRING" id="395963.Bind_0251"/>
<dbReference type="KEGG" id="bid:Bind_0251"/>
<dbReference type="eggNOG" id="COG1220">
    <property type="taxonomic scope" value="Bacteria"/>
</dbReference>
<dbReference type="HOGENOM" id="CLU_033123_0_0_5"/>
<dbReference type="OrthoDB" id="9804062at2"/>
<dbReference type="Proteomes" id="UP000001695">
    <property type="component" value="Chromosome"/>
</dbReference>
<dbReference type="GO" id="GO:0009376">
    <property type="term" value="C:HslUV protease complex"/>
    <property type="evidence" value="ECO:0007669"/>
    <property type="project" value="UniProtKB-UniRule"/>
</dbReference>
<dbReference type="GO" id="GO:0005524">
    <property type="term" value="F:ATP binding"/>
    <property type="evidence" value="ECO:0007669"/>
    <property type="project" value="UniProtKB-UniRule"/>
</dbReference>
<dbReference type="GO" id="GO:0016887">
    <property type="term" value="F:ATP hydrolysis activity"/>
    <property type="evidence" value="ECO:0007669"/>
    <property type="project" value="InterPro"/>
</dbReference>
<dbReference type="GO" id="GO:0008233">
    <property type="term" value="F:peptidase activity"/>
    <property type="evidence" value="ECO:0007669"/>
    <property type="project" value="InterPro"/>
</dbReference>
<dbReference type="GO" id="GO:0036402">
    <property type="term" value="F:proteasome-activating activity"/>
    <property type="evidence" value="ECO:0007669"/>
    <property type="project" value="UniProtKB-UniRule"/>
</dbReference>
<dbReference type="GO" id="GO:0043335">
    <property type="term" value="P:protein unfolding"/>
    <property type="evidence" value="ECO:0007669"/>
    <property type="project" value="UniProtKB-UniRule"/>
</dbReference>
<dbReference type="GO" id="GO:0051603">
    <property type="term" value="P:proteolysis involved in protein catabolic process"/>
    <property type="evidence" value="ECO:0007669"/>
    <property type="project" value="TreeGrafter"/>
</dbReference>
<dbReference type="CDD" id="cd19498">
    <property type="entry name" value="RecA-like_HslU"/>
    <property type="match status" value="1"/>
</dbReference>
<dbReference type="FunFam" id="3.40.50.300:FF:000213">
    <property type="entry name" value="ATP-dependent protease ATPase subunit HslU"/>
    <property type="match status" value="1"/>
</dbReference>
<dbReference type="FunFam" id="3.40.50.300:FF:000220">
    <property type="entry name" value="ATP-dependent protease ATPase subunit HslU"/>
    <property type="match status" value="1"/>
</dbReference>
<dbReference type="Gene3D" id="1.10.8.60">
    <property type="match status" value="1"/>
</dbReference>
<dbReference type="Gene3D" id="1.10.8.10">
    <property type="entry name" value="DNA helicase RuvA subunit, C-terminal domain"/>
    <property type="match status" value="1"/>
</dbReference>
<dbReference type="Gene3D" id="3.40.50.300">
    <property type="entry name" value="P-loop containing nucleotide triphosphate hydrolases"/>
    <property type="match status" value="2"/>
</dbReference>
<dbReference type="HAMAP" id="MF_00249">
    <property type="entry name" value="HslU"/>
    <property type="match status" value="1"/>
</dbReference>
<dbReference type="InterPro" id="IPR003593">
    <property type="entry name" value="AAA+_ATPase"/>
</dbReference>
<dbReference type="InterPro" id="IPR050052">
    <property type="entry name" value="ATP-dep_Clp_protease_ClpX"/>
</dbReference>
<dbReference type="InterPro" id="IPR003959">
    <property type="entry name" value="ATPase_AAA_core"/>
</dbReference>
<dbReference type="InterPro" id="IPR019489">
    <property type="entry name" value="Clp_ATPase_C"/>
</dbReference>
<dbReference type="InterPro" id="IPR004491">
    <property type="entry name" value="HslU"/>
</dbReference>
<dbReference type="InterPro" id="IPR027417">
    <property type="entry name" value="P-loop_NTPase"/>
</dbReference>
<dbReference type="NCBIfam" id="TIGR00390">
    <property type="entry name" value="hslU"/>
    <property type="match status" value="1"/>
</dbReference>
<dbReference type="NCBIfam" id="NF003544">
    <property type="entry name" value="PRK05201.1"/>
    <property type="match status" value="1"/>
</dbReference>
<dbReference type="PANTHER" id="PTHR48102">
    <property type="entry name" value="ATP-DEPENDENT CLP PROTEASE ATP-BINDING SUBUNIT CLPX-LIKE, MITOCHONDRIAL-RELATED"/>
    <property type="match status" value="1"/>
</dbReference>
<dbReference type="PANTHER" id="PTHR48102:SF3">
    <property type="entry name" value="ATP-DEPENDENT PROTEASE ATPASE SUBUNIT HSLU"/>
    <property type="match status" value="1"/>
</dbReference>
<dbReference type="Pfam" id="PF00004">
    <property type="entry name" value="AAA"/>
    <property type="match status" value="1"/>
</dbReference>
<dbReference type="Pfam" id="PF07724">
    <property type="entry name" value="AAA_2"/>
    <property type="match status" value="1"/>
</dbReference>
<dbReference type="SMART" id="SM00382">
    <property type="entry name" value="AAA"/>
    <property type="match status" value="1"/>
</dbReference>
<dbReference type="SMART" id="SM01086">
    <property type="entry name" value="ClpB_D2-small"/>
    <property type="match status" value="1"/>
</dbReference>
<dbReference type="SUPFAM" id="SSF52540">
    <property type="entry name" value="P-loop containing nucleoside triphosphate hydrolases"/>
    <property type="match status" value="1"/>
</dbReference>
<reference key="1">
    <citation type="journal article" date="2010" name="J. Bacteriol.">
        <title>Complete genome sequence of Beijerinckia indica subsp. indica.</title>
        <authorList>
            <person name="Tamas I."/>
            <person name="Dedysh S.N."/>
            <person name="Liesack W."/>
            <person name="Stott M.B."/>
            <person name="Alam M."/>
            <person name="Murrell J.C."/>
            <person name="Dunfield P.F."/>
        </authorList>
    </citation>
    <scope>NUCLEOTIDE SEQUENCE [LARGE SCALE GENOMIC DNA]</scope>
    <source>
        <strain>ATCC 9039 / DSM 1715 / NCIMB 8712</strain>
    </source>
</reference>
<evidence type="ECO:0000255" key="1">
    <source>
        <dbReference type="HAMAP-Rule" id="MF_00249"/>
    </source>
</evidence>
<protein>
    <recommendedName>
        <fullName evidence="1">ATP-dependent protease ATPase subunit HslU</fullName>
    </recommendedName>
    <alternativeName>
        <fullName evidence="1">Unfoldase HslU</fullName>
    </alternativeName>
</protein>
<accession>B2ICL8</accession>
<proteinExistence type="inferred from homology"/>
<name>HSLU_BEII9</name>